<dbReference type="EC" id="6.1.1.9" evidence="1"/>
<dbReference type="EMBL" id="AP006841">
    <property type="protein sequence ID" value="BAD47800.1"/>
    <property type="molecule type" value="Genomic_DNA"/>
</dbReference>
<dbReference type="RefSeq" id="WP_005801208.1">
    <property type="nucleotide sequence ID" value="NZ_UYXF01000020.1"/>
</dbReference>
<dbReference type="RefSeq" id="YP_098334.1">
    <property type="nucleotide sequence ID" value="NC_006347.1"/>
</dbReference>
<dbReference type="SMR" id="Q64XH6"/>
<dbReference type="STRING" id="295405.BF1050"/>
<dbReference type="KEGG" id="bfr:BF1050"/>
<dbReference type="PATRIC" id="fig|295405.11.peg.1042"/>
<dbReference type="HOGENOM" id="CLU_001493_0_2_10"/>
<dbReference type="OrthoDB" id="9810365at2"/>
<dbReference type="Proteomes" id="UP000002197">
    <property type="component" value="Chromosome"/>
</dbReference>
<dbReference type="GO" id="GO:0005829">
    <property type="term" value="C:cytosol"/>
    <property type="evidence" value="ECO:0007669"/>
    <property type="project" value="TreeGrafter"/>
</dbReference>
<dbReference type="GO" id="GO:0002161">
    <property type="term" value="F:aminoacyl-tRNA deacylase activity"/>
    <property type="evidence" value="ECO:0007669"/>
    <property type="project" value="InterPro"/>
</dbReference>
<dbReference type="GO" id="GO:0005524">
    <property type="term" value="F:ATP binding"/>
    <property type="evidence" value="ECO:0007669"/>
    <property type="project" value="UniProtKB-UniRule"/>
</dbReference>
<dbReference type="GO" id="GO:0004832">
    <property type="term" value="F:valine-tRNA ligase activity"/>
    <property type="evidence" value="ECO:0007669"/>
    <property type="project" value="UniProtKB-UniRule"/>
</dbReference>
<dbReference type="GO" id="GO:0006438">
    <property type="term" value="P:valyl-tRNA aminoacylation"/>
    <property type="evidence" value="ECO:0007669"/>
    <property type="project" value="UniProtKB-UniRule"/>
</dbReference>
<dbReference type="CDD" id="cd07962">
    <property type="entry name" value="Anticodon_Ia_Val"/>
    <property type="match status" value="1"/>
</dbReference>
<dbReference type="CDD" id="cd00817">
    <property type="entry name" value="ValRS_core"/>
    <property type="match status" value="1"/>
</dbReference>
<dbReference type="FunFam" id="1.10.287.380:FF:000001">
    <property type="entry name" value="Valine--tRNA ligase"/>
    <property type="match status" value="1"/>
</dbReference>
<dbReference type="FunFam" id="3.40.50.620:FF:000032">
    <property type="entry name" value="Valine--tRNA ligase"/>
    <property type="match status" value="1"/>
</dbReference>
<dbReference type="FunFam" id="3.90.740.10:FF:000015">
    <property type="entry name" value="Valine--tRNA ligase"/>
    <property type="match status" value="1"/>
</dbReference>
<dbReference type="Gene3D" id="3.40.50.620">
    <property type="entry name" value="HUPs"/>
    <property type="match status" value="2"/>
</dbReference>
<dbReference type="Gene3D" id="1.10.730.10">
    <property type="entry name" value="Isoleucyl-tRNA Synthetase, Domain 1"/>
    <property type="match status" value="1"/>
</dbReference>
<dbReference type="Gene3D" id="1.10.287.380">
    <property type="entry name" value="Valyl-tRNA synthetase, C-terminal domain"/>
    <property type="match status" value="1"/>
</dbReference>
<dbReference type="Gene3D" id="3.90.740.10">
    <property type="entry name" value="Valyl/Leucyl/Isoleucyl-tRNA synthetase, editing domain"/>
    <property type="match status" value="2"/>
</dbReference>
<dbReference type="HAMAP" id="MF_02004">
    <property type="entry name" value="Val_tRNA_synth_type1"/>
    <property type="match status" value="1"/>
</dbReference>
<dbReference type="InterPro" id="IPR001412">
    <property type="entry name" value="aa-tRNA-synth_I_CS"/>
</dbReference>
<dbReference type="InterPro" id="IPR002300">
    <property type="entry name" value="aa-tRNA-synth_Ia"/>
</dbReference>
<dbReference type="InterPro" id="IPR033705">
    <property type="entry name" value="Anticodon_Ia_Val"/>
</dbReference>
<dbReference type="InterPro" id="IPR013155">
    <property type="entry name" value="M/V/L/I-tRNA-synth_anticd-bd"/>
</dbReference>
<dbReference type="InterPro" id="IPR014729">
    <property type="entry name" value="Rossmann-like_a/b/a_fold"/>
</dbReference>
<dbReference type="InterPro" id="IPR010978">
    <property type="entry name" value="tRNA-bd_arm"/>
</dbReference>
<dbReference type="InterPro" id="IPR009080">
    <property type="entry name" value="tRNAsynth_Ia_anticodon-bd"/>
</dbReference>
<dbReference type="InterPro" id="IPR037118">
    <property type="entry name" value="Val-tRNA_synth_C_sf"/>
</dbReference>
<dbReference type="InterPro" id="IPR019499">
    <property type="entry name" value="Val-tRNA_synth_tRNA-bd"/>
</dbReference>
<dbReference type="InterPro" id="IPR009008">
    <property type="entry name" value="Val/Leu/Ile-tRNA-synth_edit"/>
</dbReference>
<dbReference type="InterPro" id="IPR002303">
    <property type="entry name" value="Valyl-tRNA_ligase"/>
</dbReference>
<dbReference type="NCBIfam" id="NF004349">
    <property type="entry name" value="PRK05729.1"/>
    <property type="match status" value="1"/>
</dbReference>
<dbReference type="NCBIfam" id="TIGR00422">
    <property type="entry name" value="valS"/>
    <property type="match status" value="1"/>
</dbReference>
<dbReference type="PANTHER" id="PTHR11946:SF109">
    <property type="entry name" value="VALINE--TRNA LIGASE"/>
    <property type="match status" value="1"/>
</dbReference>
<dbReference type="PANTHER" id="PTHR11946">
    <property type="entry name" value="VALYL-TRNA SYNTHETASES"/>
    <property type="match status" value="1"/>
</dbReference>
<dbReference type="Pfam" id="PF08264">
    <property type="entry name" value="Anticodon_1"/>
    <property type="match status" value="1"/>
</dbReference>
<dbReference type="Pfam" id="PF00133">
    <property type="entry name" value="tRNA-synt_1"/>
    <property type="match status" value="1"/>
</dbReference>
<dbReference type="Pfam" id="PF10458">
    <property type="entry name" value="Val_tRNA-synt_C"/>
    <property type="match status" value="1"/>
</dbReference>
<dbReference type="PRINTS" id="PR00986">
    <property type="entry name" value="TRNASYNTHVAL"/>
</dbReference>
<dbReference type="SUPFAM" id="SSF47323">
    <property type="entry name" value="Anticodon-binding domain of a subclass of class I aminoacyl-tRNA synthetases"/>
    <property type="match status" value="1"/>
</dbReference>
<dbReference type="SUPFAM" id="SSF52374">
    <property type="entry name" value="Nucleotidylyl transferase"/>
    <property type="match status" value="1"/>
</dbReference>
<dbReference type="SUPFAM" id="SSF46589">
    <property type="entry name" value="tRNA-binding arm"/>
    <property type="match status" value="1"/>
</dbReference>
<dbReference type="SUPFAM" id="SSF50677">
    <property type="entry name" value="ValRS/IleRS/LeuRS editing domain"/>
    <property type="match status" value="1"/>
</dbReference>
<dbReference type="PROSITE" id="PS00178">
    <property type="entry name" value="AA_TRNA_LIGASE_I"/>
    <property type="match status" value="1"/>
</dbReference>
<keyword id="KW-0030">Aminoacyl-tRNA synthetase</keyword>
<keyword id="KW-0067">ATP-binding</keyword>
<keyword id="KW-0175">Coiled coil</keyword>
<keyword id="KW-0963">Cytoplasm</keyword>
<keyword id="KW-0436">Ligase</keyword>
<keyword id="KW-0547">Nucleotide-binding</keyword>
<keyword id="KW-0648">Protein biosynthesis</keyword>
<sequence>MELASKYNPADVEGKWYQYWLDHKLFSSKPDGREPYTIVIPPPNVTGVLHMGHMLNNTIQDILVRRARMEGKNACWVPGTDHASIATEAKVVNKLAAQGIKKTDLSRDEFLKHAWAWTDEHGGIILKQLRKLGASCDWDRTAFTMDEKRSESVLKVFVDLYNKGLIYRGVRMVNWDPKALTALSDEEVIYKEEHGKLFYLRYKIEGEDGYAVVATTRPETIMGDTAMCINPNDPKNQHLKGKKVIVPLVGRVIPVIEDDYVDIEFGTGCLKVTPAHDVNDYMLGEKYNLPSIDIFNDNGTISEAAGMYIGMDRFDVRKQIEKDLEAAGLLEKTEAYTNKVGYSERTNVVIEPKLSMQWFLKMEHLAQIALEPVMKDDIKFYPAKYKNTYRHWMENIKDWCISRQLWWGHRIPAYFLPEGGYVVAVTDEEALKLAREKTGNPNLKMTDLRQDEDCLDTWFSSWLWPISLFDGINNPGNEEINYYYPTSDLVTGPDIIFFWVARMIMAGYEYEGKMPFKNVYFTGIVRDKLGRKMSKSLGNSPDPLELIEKYGADGVRMGMMLSAPAGNDILFDDALCEQGRNFCNKIWNAFRLVKGWENGMGTIDIPADAHLAVQWFDQRLDAAAVEVADLFSKYRLSEALMLIYKLFWDEFSSWLLEIVKPAYGQPVNGFIYSMTLSAFERLLAMLHPFMPFITEELWQQLREREPGASLMVQPLGEPGEVNEEFLQQFETAKEIISSVRTIRLQKNIALKEPLELQVVGANPVEKMNPVIRKMCNLSAIEVVDAKADGASSFMIGTTEFAVPLGNMIDVDAEIARMEAELKHKEGFLQGVLKKLSNEKFVNNAPAAVIEMERKKQADAESIIQSLKESIASLKNV</sequence>
<organism>
    <name type="scientific">Bacteroides fragilis (strain YCH46)</name>
    <dbReference type="NCBI Taxonomy" id="295405"/>
    <lineage>
        <taxon>Bacteria</taxon>
        <taxon>Pseudomonadati</taxon>
        <taxon>Bacteroidota</taxon>
        <taxon>Bacteroidia</taxon>
        <taxon>Bacteroidales</taxon>
        <taxon>Bacteroidaceae</taxon>
        <taxon>Bacteroides</taxon>
    </lineage>
</organism>
<feature type="chain" id="PRO_0000224437" description="Valine--tRNA ligase">
    <location>
        <begin position="1"/>
        <end position="876"/>
    </location>
</feature>
<feature type="coiled-coil region" evidence="1">
    <location>
        <begin position="805"/>
        <end position="826"/>
    </location>
</feature>
<feature type="coiled-coil region" evidence="1">
    <location>
        <begin position="853"/>
        <end position="875"/>
    </location>
</feature>
<feature type="short sequence motif" description="'HIGH' region">
    <location>
        <begin position="43"/>
        <end position="53"/>
    </location>
</feature>
<feature type="short sequence motif" description="'KMSKS' region">
    <location>
        <begin position="532"/>
        <end position="536"/>
    </location>
</feature>
<feature type="binding site" evidence="1">
    <location>
        <position position="535"/>
    </location>
    <ligand>
        <name>ATP</name>
        <dbReference type="ChEBI" id="CHEBI:30616"/>
    </ligand>
</feature>
<gene>
    <name evidence="1" type="primary">valS</name>
    <name type="ordered locus">BF1050</name>
</gene>
<comment type="function">
    <text evidence="1">Catalyzes the attachment of valine to tRNA(Val). As ValRS can inadvertently accommodate and process structurally similar amino acids such as threonine, to avoid such errors, it has a 'posttransfer' editing activity that hydrolyzes mischarged Thr-tRNA(Val) in a tRNA-dependent manner.</text>
</comment>
<comment type="catalytic activity">
    <reaction evidence="1">
        <text>tRNA(Val) + L-valine + ATP = L-valyl-tRNA(Val) + AMP + diphosphate</text>
        <dbReference type="Rhea" id="RHEA:10704"/>
        <dbReference type="Rhea" id="RHEA-COMP:9672"/>
        <dbReference type="Rhea" id="RHEA-COMP:9708"/>
        <dbReference type="ChEBI" id="CHEBI:30616"/>
        <dbReference type="ChEBI" id="CHEBI:33019"/>
        <dbReference type="ChEBI" id="CHEBI:57762"/>
        <dbReference type="ChEBI" id="CHEBI:78442"/>
        <dbReference type="ChEBI" id="CHEBI:78537"/>
        <dbReference type="ChEBI" id="CHEBI:456215"/>
        <dbReference type="EC" id="6.1.1.9"/>
    </reaction>
</comment>
<comment type="subunit">
    <text evidence="1">Monomer.</text>
</comment>
<comment type="subcellular location">
    <subcellularLocation>
        <location evidence="1">Cytoplasm</location>
    </subcellularLocation>
</comment>
<comment type="domain">
    <text evidence="1">ValRS has two distinct active sites: one for aminoacylation and one for editing. The misactivated threonine is translocated from the active site to the editing site.</text>
</comment>
<comment type="domain">
    <text evidence="1">The C-terminal coiled-coil domain is crucial for aminoacylation activity.</text>
</comment>
<comment type="similarity">
    <text evidence="1">Belongs to the class-I aminoacyl-tRNA synthetase family. ValS type 1 subfamily.</text>
</comment>
<reference key="1">
    <citation type="journal article" date="2004" name="Proc. Natl. Acad. Sci. U.S.A.">
        <title>Genomic analysis of Bacteroides fragilis reveals extensive DNA inversions regulating cell surface adaptation.</title>
        <authorList>
            <person name="Kuwahara T."/>
            <person name="Yamashita A."/>
            <person name="Hirakawa H."/>
            <person name="Nakayama H."/>
            <person name="Toh H."/>
            <person name="Okada N."/>
            <person name="Kuhara S."/>
            <person name="Hattori M."/>
            <person name="Hayashi T."/>
            <person name="Ohnishi Y."/>
        </authorList>
    </citation>
    <scope>NUCLEOTIDE SEQUENCE [LARGE SCALE GENOMIC DNA]</scope>
    <source>
        <strain>YCH46</strain>
    </source>
</reference>
<name>SYV_BACFR</name>
<accession>Q64XH6</accession>
<protein>
    <recommendedName>
        <fullName evidence="1">Valine--tRNA ligase</fullName>
        <ecNumber evidence="1">6.1.1.9</ecNumber>
    </recommendedName>
    <alternativeName>
        <fullName evidence="1">Valyl-tRNA synthetase</fullName>
        <shortName evidence="1">ValRS</shortName>
    </alternativeName>
</protein>
<proteinExistence type="inferred from homology"/>
<evidence type="ECO:0000255" key="1">
    <source>
        <dbReference type="HAMAP-Rule" id="MF_02004"/>
    </source>
</evidence>